<gene>
    <name type="primary">Nat2</name>
    <name type="synonym">Aac2</name>
</gene>
<reference key="1">
    <citation type="journal article" date="1991" name="Mol. Pharmacol.">
        <title>Molecular genetic basis of rapid and slow acetylation in mice.</title>
        <authorList>
            <person name="Martell K.J."/>
            <person name="Vatsis K.P."/>
            <person name="Weber W.W."/>
        </authorList>
    </citation>
    <scope>NUCLEOTIDE SEQUENCE</scope>
    <scope>VARIANT ILE-99</scope>
    <source>
        <strain>A/J</strain>
        <strain>C57BL/6J</strain>
    </source>
</reference>
<reference key="2">
    <citation type="submission" date="1995-09" db="EMBL/GenBank/DDBJ databases">
        <authorList>
            <person name="Hein D.W."/>
            <person name="Doll M.A."/>
        </authorList>
    </citation>
    <scope>NUCLEOTIDE SEQUENCE</scope>
    <source>
        <strain>C3H/HeJ</strain>
        <tissue>Heart</tissue>
    </source>
</reference>
<reference key="3">
    <citation type="journal article" date="1994" name="Biochem. J.">
        <title>Arylamine N-acetyltransferase in Balb/c mice: identification of a novel mouse isoenzyme by cloning and expression in vitro.</title>
        <authorList>
            <person name="Kelly S.L."/>
            <person name="Sim E."/>
        </authorList>
    </citation>
    <scope>NUCLEOTIDE SEQUENCE</scope>
    <scope>CATALYTIC ACTIVITY</scope>
    <source>
        <strain>BALB/cJ</strain>
        <tissue>Liver</tissue>
    </source>
</reference>
<reference key="4">
    <citation type="journal article" date="1992" name="Mol. Pharmacol.">
        <title>Cloned mouse N-acetyltransferases: enzymatic properties of expressed Nat-1 and Nat-2 gene products.</title>
        <authorList>
            <person name="Martell K.J."/>
            <person name="Levy G.N."/>
            <person name="Weber W.W."/>
        </authorList>
    </citation>
    <scope>CHARACTERIZATION</scope>
</reference>
<reference key="5">
    <citation type="journal article" date="2010" name="Cell">
        <title>A tissue-specific atlas of mouse protein phosphorylation and expression.</title>
        <authorList>
            <person name="Huttlin E.L."/>
            <person name="Jedrychowski M.P."/>
            <person name="Elias J.E."/>
            <person name="Goswami T."/>
            <person name="Rad R."/>
            <person name="Beausoleil S.A."/>
            <person name="Villen J."/>
            <person name="Haas W."/>
            <person name="Sowa M.E."/>
            <person name="Gygi S.P."/>
        </authorList>
    </citation>
    <scope>IDENTIFICATION BY MASS SPECTROMETRY [LARGE SCALE ANALYSIS]</scope>
    <source>
        <tissue>Brown adipose tissue</tissue>
        <tissue>Kidney</tissue>
        <tissue>Liver</tissue>
        <tissue>Lung</tissue>
        <tissue>Spleen</tissue>
        <tissue>Testis</tissue>
    </source>
</reference>
<comment type="function">
    <text evidence="2">Catalyzes the N- or O-acetylation of various arylamine and heterocyclic amine substrates, and participates in the detoxification of a plethora of hydrazine and arylamine drugs.</text>
</comment>
<comment type="catalytic activity">
    <reaction evidence="4">
        <text>an arylamine + acetyl-CoA = an N-acetylarylamine + CoA</text>
        <dbReference type="Rhea" id="RHEA:16613"/>
        <dbReference type="ChEBI" id="CHEBI:13790"/>
        <dbReference type="ChEBI" id="CHEBI:50471"/>
        <dbReference type="ChEBI" id="CHEBI:57287"/>
        <dbReference type="ChEBI" id="CHEBI:57288"/>
        <dbReference type="EC" id="2.3.1.5"/>
    </reaction>
</comment>
<comment type="catalytic activity">
    <reaction evidence="2">
        <text>an N-hydroxyarylamine + acetyl-CoA = an N-acetoxyarylamine + CoA</text>
        <dbReference type="Rhea" id="RHEA:20277"/>
        <dbReference type="ChEBI" id="CHEBI:13792"/>
        <dbReference type="ChEBI" id="CHEBI:21494"/>
        <dbReference type="ChEBI" id="CHEBI:57287"/>
        <dbReference type="ChEBI" id="CHEBI:57288"/>
        <dbReference type="EC" id="2.3.1.118"/>
    </reaction>
</comment>
<comment type="subcellular location">
    <subcellularLocation>
        <location>Cytoplasm</location>
    </subcellularLocation>
</comment>
<comment type="polymorphism">
    <text evidence="3">There are two forms of NAT2: a rapid/stable isoform (Asn-99) and a slow/unstable isoform (Ile-99).</text>
</comment>
<comment type="similarity">
    <text evidence="5">Belongs to the arylamine N-acetyltransferase family.</text>
</comment>
<accession>P50295</accession>
<evidence type="ECO:0000250" key="1"/>
<evidence type="ECO:0000250" key="2">
    <source>
        <dbReference type="UniProtKB" id="P11245"/>
    </source>
</evidence>
<evidence type="ECO:0000269" key="3">
    <source>
    </source>
</evidence>
<evidence type="ECO:0000269" key="4">
    <source>
    </source>
</evidence>
<evidence type="ECO:0000305" key="5"/>
<feature type="chain" id="PRO_0000107909" description="Arylamine N-acetyltransferase 2">
    <location>
        <begin position="1"/>
        <end position="290"/>
    </location>
</feature>
<feature type="active site" description="Acyl-thioester intermediate" evidence="1">
    <location>
        <position position="68"/>
    </location>
</feature>
<feature type="active site" evidence="1">
    <location>
        <position position="107"/>
    </location>
</feature>
<feature type="active site" evidence="1">
    <location>
        <position position="122"/>
    </location>
</feature>
<feature type="binding site" evidence="1">
    <location>
        <position position="103"/>
    </location>
    <ligand>
        <name>CoA</name>
        <dbReference type="ChEBI" id="CHEBI:57287"/>
    </ligand>
</feature>
<feature type="binding site" evidence="1">
    <location>
        <position position="104"/>
    </location>
    <ligand>
        <name>CoA</name>
        <dbReference type="ChEBI" id="CHEBI:57287"/>
    </ligand>
</feature>
<feature type="binding site" evidence="1">
    <location>
        <begin position="106"/>
        <end position="107"/>
    </location>
    <ligand>
        <name>substrate</name>
    </ligand>
</feature>
<feature type="binding site" evidence="1">
    <location>
        <position position="208"/>
    </location>
    <ligand>
        <name>CoA</name>
        <dbReference type="ChEBI" id="CHEBI:57287"/>
    </ligand>
</feature>
<feature type="sequence variant" description="In allele NAT2*9; slow/unstable isoform.">
    <original>N</original>
    <variation>I</variation>
    <location>
        <position position="99"/>
    </location>
</feature>
<sequence>MDIEAYFERIGYQSTRSKLDLKTLTEILQHQIRAIPFENLNIHCGESMELSLEAIFDQIVRKKRGGWCLQVNHLLYWALTKLGFETTMLGGYVFNTPANKYSSGMIHLLVQVTISGKDYIVDAGFGRSYQMWEPLELTSGKDQPQVPAIFRLTEENGTWYLDQIRREQYVPNQEFINSDLLEKNKYRKIYSFTLEPRTIEDFESMNTYLQTSPASVFTSKSFCSLQTPEGVHCLVGSTLTYRRFSYKDNVDLVEFKSLTEEEIEDVLRTIFGVSLERKLVPKHGDRFFTI</sequence>
<protein>
    <recommendedName>
        <fullName>Arylamine N-acetyltransferase 2</fullName>
        <ecNumber evidence="4">2.3.1.5</ecNumber>
    </recommendedName>
    <alternativeName>
        <fullName>Arylamide acetylase 2</fullName>
    </alternativeName>
    <alternativeName>
        <fullName>N-acetyltransferase type 2</fullName>
        <shortName>NAT-2</shortName>
    </alternativeName>
    <alternativeName>
        <fullName>N-hydroxyarylamine O-acetyltransferase</fullName>
        <ecNumber evidence="2">2.3.1.118</ecNumber>
    </alternativeName>
</protein>
<dbReference type="EC" id="2.3.1.5" evidence="4"/>
<dbReference type="EC" id="2.3.1.118" evidence="2"/>
<dbReference type="EMBL" id="U35886">
    <property type="protein sequence ID" value="AAA78943.1"/>
    <property type="molecule type" value="mRNA"/>
</dbReference>
<dbReference type="EMBL" id="U35887">
    <property type="protein sequence ID" value="AAA78944.1"/>
    <property type="molecule type" value="mRNA"/>
</dbReference>
<dbReference type="EMBL" id="U37249">
    <property type="protein sequence ID" value="AAA80353.1"/>
    <property type="molecule type" value="Genomic_DNA"/>
</dbReference>
<dbReference type="EMBL" id="U37250">
    <property type="protein sequence ID" value="AAA80354.1"/>
    <property type="molecule type" value="Genomic_DNA"/>
</dbReference>
<dbReference type="CCDS" id="CCDS22338.1"/>
<dbReference type="PIR" id="B61267">
    <property type="entry name" value="B61267"/>
</dbReference>
<dbReference type="RefSeq" id="NP_001162049.1">
    <property type="nucleotide sequence ID" value="NM_001168577.1"/>
</dbReference>
<dbReference type="RefSeq" id="NP_035004.1">
    <property type="nucleotide sequence ID" value="NM_010874.3"/>
</dbReference>
<dbReference type="SMR" id="P50295"/>
<dbReference type="FunCoup" id="P50295">
    <property type="interactions" value="257"/>
</dbReference>
<dbReference type="STRING" id="10090.ENSMUSP00000130065"/>
<dbReference type="BindingDB" id="P50295"/>
<dbReference type="ChEMBL" id="CHEMBL5724"/>
<dbReference type="iPTMnet" id="P50295"/>
<dbReference type="PhosphoSitePlus" id="P50295"/>
<dbReference type="SwissPalm" id="P50295"/>
<dbReference type="jPOST" id="P50295"/>
<dbReference type="PaxDb" id="10090-ENSMUSP00000130065"/>
<dbReference type="PeptideAtlas" id="P50295"/>
<dbReference type="ProteomicsDB" id="281807"/>
<dbReference type="Pumba" id="P50295"/>
<dbReference type="DNASU" id="17961"/>
<dbReference type="Ensembl" id="ENSMUST00000093470.7">
    <property type="protein sequence ID" value="ENSMUSP00000091181.6"/>
    <property type="gene ID" value="ENSMUSG00000051147.11"/>
</dbReference>
<dbReference type="Ensembl" id="ENSMUST00000163856.3">
    <property type="protein sequence ID" value="ENSMUSP00000130065.2"/>
    <property type="gene ID" value="ENSMUSG00000051147.11"/>
</dbReference>
<dbReference type="GeneID" id="17961"/>
<dbReference type="KEGG" id="mmu:17961"/>
<dbReference type="UCSC" id="uc009lvw.2">
    <property type="organism name" value="mouse"/>
</dbReference>
<dbReference type="AGR" id="MGI:109201"/>
<dbReference type="CTD" id="10"/>
<dbReference type="MGI" id="MGI:109201">
    <property type="gene designation" value="Nat2"/>
</dbReference>
<dbReference type="VEuPathDB" id="HostDB:ENSMUSG00000051147"/>
<dbReference type="eggNOG" id="ENOG502RD0D">
    <property type="taxonomic scope" value="Eukaryota"/>
</dbReference>
<dbReference type="GeneTree" id="ENSGT00390000012054"/>
<dbReference type="HOGENOM" id="CLU_049918_3_0_1"/>
<dbReference type="InParanoid" id="P50295"/>
<dbReference type="OMA" id="CYEHNTL"/>
<dbReference type="OrthoDB" id="10260017at2759"/>
<dbReference type="PhylomeDB" id="P50295"/>
<dbReference type="TreeFam" id="TF106311"/>
<dbReference type="BRENDA" id="2.3.1.5">
    <property type="organism ID" value="3474"/>
</dbReference>
<dbReference type="Reactome" id="R-MMU-156582">
    <property type="pathway name" value="Acetylation"/>
</dbReference>
<dbReference type="Reactome" id="R-MMU-9753281">
    <property type="pathway name" value="Paracetamol ADME"/>
</dbReference>
<dbReference type="BioGRID-ORCS" id="17961">
    <property type="hits" value="1 hit in 76 CRISPR screens"/>
</dbReference>
<dbReference type="PRO" id="PR:P50295"/>
<dbReference type="Proteomes" id="UP000000589">
    <property type="component" value="Chromosome 8"/>
</dbReference>
<dbReference type="RNAct" id="P50295">
    <property type="molecule type" value="protein"/>
</dbReference>
<dbReference type="Bgee" id="ENSMUSG00000051147">
    <property type="expression patterns" value="Expressed in small intestine Peyer's patch and 196 other cell types or tissues"/>
</dbReference>
<dbReference type="ExpressionAtlas" id="P50295">
    <property type="expression patterns" value="baseline and differential"/>
</dbReference>
<dbReference type="GO" id="GO:0005737">
    <property type="term" value="C:cytoplasm"/>
    <property type="evidence" value="ECO:0007669"/>
    <property type="project" value="UniProtKB-SubCell"/>
</dbReference>
<dbReference type="GO" id="GO:0004060">
    <property type="term" value="F:arylamine N-acetyltransferase activity"/>
    <property type="evidence" value="ECO:0000314"/>
    <property type="project" value="MGI"/>
</dbReference>
<dbReference type="GO" id="GO:0046990">
    <property type="term" value="F:N-hydroxyarylamine O-acetyltransferase activity"/>
    <property type="evidence" value="ECO:0000250"/>
    <property type="project" value="UniProtKB"/>
</dbReference>
<dbReference type="FunFam" id="3.30.2140.20:FF:000001">
    <property type="entry name" value="Arylamine N-acetyltransferase 1"/>
    <property type="match status" value="1"/>
</dbReference>
<dbReference type="Gene3D" id="3.30.2140.20">
    <property type="match status" value="1"/>
</dbReference>
<dbReference type="InterPro" id="IPR001447">
    <property type="entry name" value="Arylamine_N-AcTrfase"/>
</dbReference>
<dbReference type="InterPro" id="IPR053710">
    <property type="entry name" value="Arylamine_NAT_domain_sf"/>
</dbReference>
<dbReference type="InterPro" id="IPR038765">
    <property type="entry name" value="Papain-like_cys_pep_sf"/>
</dbReference>
<dbReference type="PANTHER" id="PTHR11786:SF8">
    <property type="entry name" value="ARYLAMINE N-ACETYLTRANSFERASE 1"/>
    <property type="match status" value="1"/>
</dbReference>
<dbReference type="PANTHER" id="PTHR11786">
    <property type="entry name" value="N-HYDROXYARYLAMINE O-ACETYLTRANSFERASE"/>
    <property type="match status" value="1"/>
</dbReference>
<dbReference type="Pfam" id="PF00797">
    <property type="entry name" value="Acetyltransf_2"/>
    <property type="match status" value="1"/>
</dbReference>
<dbReference type="PRINTS" id="PR01543">
    <property type="entry name" value="ANATRNSFRASE"/>
</dbReference>
<dbReference type="SUPFAM" id="SSF54001">
    <property type="entry name" value="Cysteine proteinases"/>
    <property type="match status" value="1"/>
</dbReference>
<name>ARY2_MOUSE</name>
<proteinExistence type="evidence at protein level"/>
<keyword id="KW-0012">Acyltransferase</keyword>
<keyword id="KW-0963">Cytoplasm</keyword>
<keyword id="KW-1185">Reference proteome</keyword>
<keyword id="KW-0808">Transferase</keyword>
<organism>
    <name type="scientific">Mus musculus</name>
    <name type="common">Mouse</name>
    <dbReference type="NCBI Taxonomy" id="10090"/>
    <lineage>
        <taxon>Eukaryota</taxon>
        <taxon>Metazoa</taxon>
        <taxon>Chordata</taxon>
        <taxon>Craniata</taxon>
        <taxon>Vertebrata</taxon>
        <taxon>Euteleostomi</taxon>
        <taxon>Mammalia</taxon>
        <taxon>Eutheria</taxon>
        <taxon>Euarchontoglires</taxon>
        <taxon>Glires</taxon>
        <taxon>Rodentia</taxon>
        <taxon>Myomorpha</taxon>
        <taxon>Muroidea</taxon>
        <taxon>Muridae</taxon>
        <taxon>Murinae</taxon>
        <taxon>Mus</taxon>
        <taxon>Mus</taxon>
    </lineage>
</organism>